<evidence type="ECO:0000256" key="1">
    <source>
        <dbReference type="SAM" id="MobiDB-lite"/>
    </source>
</evidence>
<evidence type="ECO:0000269" key="2">
    <source>
    </source>
</evidence>
<comment type="function">
    <text evidence="2">Required for translation, stability and/or localization of lin-15a.</text>
</comment>
<comment type="subcellular location">
    <subcellularLocation>
        <location evidence="2">Nucleus</location>
    </subcellularLocation>
</comment>
<comment type="tissue specificity">
    <text evidence="2">Widely expressed throughout embryonic development. Expressed in the six multipotent ventral ectodermal blast cells, P3.p-P8.p, which generate the vulva and in their descendants throughout vulval development.</text>
</comment>
<comment type="developmental stage">
    <text evidence="2">Expressed from the early one-cell or late two-cell stage and continues throughout embryonic and larval development and in adulthood.</text>
</comment>
<comment type="disruption phenotype">
    <text evidence="2">Greatly reduced nuclear accumulation of lin-15a protein but no effect on mRNA levels.</text>
</comment>
<name>LIN56_CAEEL</name>
<feature type="chain" id="PRO_0000065537" description="Protein lin-56">
    <location>
        <begin position="1"/>
        <end position="322"/>
    </location>
</feature>
<feature type="region of interest" description="Disordered" evidence="1">
    <location>
        <begin position="264"/>
        <end position="322"/>
    </location>
</feature>
<feature type="compositionally biased region" description="Basic and acidic residues" evidence="1">
    <location>
        <begin position="275"/>
        <end position="304"/>
    </location>
</feature>
<dbReference type="EMBL" id="Z48585">
    <property type="protein sequence ID" value="CAA88485.1"/>
    <property type="molecule type" value="Genomic_DNA"/>
</dbReference>
<dbReference type="PIR" id="T27966">
    <property type="entry name" value="T27966"/>
</dbReference>
<dbReference type="RefSeq" id="NP_496246.1">
    <property type="nucleotide sequence ID" value="NM_063845.5"/>
</dbReference>
<dbReference type="BioGRID" id="39927">
    <property type="interactions" value="4"/>
</dbReference>
<dbReference type="FunCoup" id="Q09377">
    <property type="interactions" value="450"/>
</dbReference>
<dbReference type="IntAct" id="Q09377">
    <property type="interactions" value="4"/>
</dbReference>
<dbReference type="STRING" id="6239.ZK673.3.1"/>
<dbReference type="PaxDb" id="6239-ZK673.3"/>
<dbReference type="PeptideAtlas" id="Q09377"/>
<dbReference type="EnsemblMetazoa" id="ZK673.3.1">
    <property type="protein sequence ID" value="ZK673.3.1"/>
    <property type="gene ID" value="WBGene00003038"/>
</dbReference>
<dbReference type="GeneID" id="174609"/>
<dbReference type="KEGG" id="cel:CELE_ZK673.3"/>
<dbReference type="UCSC" id="ZK673.3">
    <property type="organism name" value="c. elegans"/>
</dbReference>
<dbReference type="AGR" id="WB:WBGene00003038"/>
<dbReference type="CTD" id="174609"/>
<dbReference type="WormBase" id="ZK673.3">
    <property type="protein sequence ID" value="CE16743"/>
    <property type="gene ID" value="WBGene00003038"/>
    <property type="gene designation" value="lin-56"/>
</dbReference>
<dbReference type="eggNOG" id="ENOG502TK40">
    <property type="taxonomic scope" value="Eukaryota"/>
</dbReference>
<dbReference type="HOGENOM" id="CLU_863906_0_0_1"/>
<dbReference type="InParanoid" id="Q09377"/>
<dbReference type="OrthoDB" id="10653821at2759"/>
<dbReference type="SignaLink" id="Q09377"/>
<dbReference type="PRO" id="PR:Q09377"/>
<dbReference type="Proteomes" id="UP000001940">
    <property type="component" value="Chromosome II"/>
</dbReference>
<dbReference type="Bgee" id="WBGene00003038">
    <property type="expression patterns" value="Expressed in germ line (C elegans) and 4 other cell types or tissues"/>
</dbReference>
<dbReference type="GO" id="GO:0005634">
    <property type="term" value="C:nucleus"/>
    <property type="evidence" value="ECO:0000314"/>
    <property type="project" value="UniProtKB"/>
</dbReference>
<dbReference type="GO" id="GO:0010628">
    <property type="term" value="P:positive regulation of gene expression"/>
    <property type="evidence" value="ECO:0000315"/>
    <property type="project" value="UniProtKB"/>
</dbReference>
<dbReference type="GO" id="GO:0034504">
    <property type="term" value="P:protein localization to nucleus"/>
    <property type="evidence" value="ECO:0000315"/>
    <property type="project" value="UniProtKB"/>
</dbReference>
<dbReference type="GO" id="GO:0050821">
    <property type="term" value="P:protein stabilization"/>
    <property type="evidence" value="ECO:0000315"/>
    <property type="project" value="UniProtKB"/>
</dbReference>
<dbReference type="GO" id="GO:0006417">
    <property type="term" value="P:regulation of translation"/>
    <property type="evidence" value="ECO:0007669"/>
    <property type="project" value="UniProtKB-KW"/>
</dbReference>
<dbReference type="GO" id="GO:0040025">
    <property type="term" value="P:vulval development"/>
    <property type="evidence" value="ECO:0000270"/>
    <property type="project" value="UniProtKB"/>
</dbReference>
<dbReference type="Pfam" id="PF25375">
    <property type="entry name" value="Lin-15B"/>
    <property type="match status" value="1"/>
</dbReference>
<accession>Q09377</accession>
<reference key="1">
    <citation type="journal article" date="1998" name="Science">
        <title>Genome sequence of the nematode C. elegans: a platform for investigating biology.</title>
        <authorList>
            <consortium name="The C. elegans sequencing consortium"/>
        </authorList>
    </citation>
    <scope>NUCLEOTIDE SEQUENCE [LARGE SCALE GENOMIC DNA]</scope>
    <source>
        <strain>Bristol N2</strain>
    </source>
</reference>
<reference key="2">
    <citation type="journal article" date="2011" name="Genetics">
        <title>The LIN-15A and LIN-56 transcriptional regulators interact to negatively regulate EGF/Ras signaling in Caenorhabditis elegans vulval cell-fate determination.</title>
        <authorList>
            <person name="Davison E.M."/>
            <person name="Saffer A.M."/>
            <person name="Huang L.S."/>
            <person name="DeModena J."/>
            <person name="Sternberg P.W."/>
            <person name="Horvitz H.R."/>
        </authorList>
    </citation>
    <scope>FUNCTION</scope>
    <scope>SUBCELLULAR LOCATION</scope>
    <scope>TISSUE SPECIFICITY</scope>
    <scope>DEVELOPMENTAL STAGE</scope>
    <scope>DISRUPTION PHENOTYPE</scope>
</reference>
<keyword id="KW-0539">Nucleus</keyword>
<keyword id="KW-1185">Reference proteome</keyword>
<keyword id="KW-0810">Translation regulation</keyword>
<sequence>MDHHAMYRTAEFNKTTVRLLAEFIEKTGQNATIVNMDSFLEFFAYLNPTAPIPTVPEIEKQLLLKSPIRCIVCGMETESDSAVTLSIDNASIILTATVIGYCRDPSDAVNQIRKESLRACTKHFNSIFHVIFEGLQIENTYCAHHAKYSLANRWCKVYTMIRSSLGEQFTKFDVRNFKSILQSFLDTFGEIDDDKKDKESSHFDECFEEMDSENVEIKMESPQEEAAEKSKFSENLVEVKLEPIETHELDKTISDFSSSDIIDSSQKLQQNGFPEKVEQMDKYSNKLKDEASDKKYEKPGKKDYVEEEGYWAPITDSEDDEA</sequence>
<proteinExistence type="evidence at transcript level"/>
<organism>
    <name type="scientific">Caenorhabditis elegans</name>
    <dbReference type="NCBI Taxonomy" id="6239"/>
    <lineage>
        <taxon>Eukaryota</taxon>
        <taxon>Metazoa</taxon>
        <taxon>Ecdysozoa</taxon>
        <taxon>Nematoda</taxon>
        <taxon>Chromadorea</taxon>
        <taxon>Rhabditida</taxon>
        <taxon>Rhabditina</taxon>
        <taxon>Rhabditomorpha</taxon>
        <taxon>Rhabditoidea</taxon>
        <taxon>Rhabditidae</taxon>
        <taxon>Peloderinae</taxon>
        <taxon>Caenorhabditis</taxon>
    </lineage>
</organism>
<gene>
    <name type="primary">lin-56</name>
    <name type="ORF">ZK673.3</name>
</gene>
<protein>
    <recommendedName>
        <fullName>Protein lin-56</fullName>
    </recommendedName>
    <alternativeName>
        <fullName>Abnormal cell lineage protein 56</fullName>
    </alternativeName>
</protein>